<protein>
    <recommendedName>
        <fullName evidence="1">Phosphatidylserine decarboxylase proenzyme</fullName>
        <ecNumber evidence="1">4.1.1.65</ecNumber>
    </recommendedName>
    <component>
        <recommendedName>
            <fullName evidence="1">Phosphatidylserine decarboxylase alpha chain</fullName>
        </recommendedName>
    </component>
    <component>
        <recommendedName>
            <fullName evidence="1">Phosphatidylserine decarboxylase beta chain</fullName>
        </recommendedName>
    </component>
</protein>
<accession>A0KSQ8</accession>
<dbReference type="EC" id="4.1.1.65" evidence="1"/>
<dbReference type="EMBL" id="CP000469">
    <property type="protein sequence ID" value="ABK46827.1"/>
    <property type="molecule type" value="Genomic_DNA"/>
</dbReference>
<dbReference type="RefSeq" id="WP_011715782.1">
    <property type="nucleotide sequence ID" value="NC_008577.1"/>
</dbReference>
<dbReference type="SMR" id="A0KSQ8"/>
<dbReference type="STRING" id="94122.Shewana3_0588"/>
<dbReference type="KEGG" id="shn:Shewana3_0588"/>
<dbReference type="eggNOG" id="COG0688">
    <property type="taxonomic scope" value="Bacteria"/>
</dbReference>
<dbReference type="HOGENOM" id="CLU_029061_4_1_6"/>
<dbReference type="OrthoDB" id="9802030at2"/>
<dbReference type="UniPathway" id="UPA00558">
    <property type="reaction ID" value="UER00616"/>
</dbReference>
<dbReference type="Proteomes" id="UP000002589">
    <property type="component" value="Chromosome"/>
</dbReference>
<dbReference type="GO" id="GO:0005886">
    <property type="term" value="C:plasma membrane"/>
    <property type="evidence" value="ECO:0007669"/>
    <property type="project" value="UniProtKB-SubCell"/>
</dbReference>
<dbReference type="GO" id="GO:0004609">
    <property type="term" value="F:phosphatidylserine decarboxylase activity"/>
    <property type="evidence" value="ECO:0007669"/>
    <property type="project" value="UniProtKB-UniRule"/>
</dbReference>
<dbReference type="GO" id="GO:0006646">
    <property type="term" value="P:phosphatidylethanolamine biosynthetic process"/>
    <property type="evidence" value="ECO:0007669"/>
    <property type="project" value="UniProtKB-UniRule"/>
</dbReference>
<dbReference type="HAMAP" id="MF_00662">
    <property type="entry name" value="PS_decarb_PSD_B_type1"/>
    <property type="match status" value="1"/>
</dbReference>
<dbReference type="InterPro" id="IPR003817">
    <property type="entry name" value="PS_Dcarbxylase"/>
</dbReference>
<dbReference type="InterPro" id="IPR033177">
    <property type="entry name" value="PSD-B"/>
</dbReference>
<dbReference type="InterPro" id="IPR033178">
    <property type="entry name" value="PSD_type1_pro"/>
</dbReference>
<dbReference type="NCBIfam" id="TIGR00163">
    <property type="entry name" value="PS_decarb"/>
    <property type="match status" value="1"/>
</dbReference>
<dbReference type="PANTHER" id="PTHR10067">
    <property type="entry name" value="PHOSPHATIDYLSERINE DECARBOXYLASE"/>
    <property type="match status" value="1"/>
</dbReference>
<dbReference type="PANTHER" id="PTHR10067:SF6">
    <property type="entry name" value="PHOSPHATIDYLSERINE DECARBOXYLASE PROENZYME, MITOCHONDRIAL"/>
    <property type="match status" value="1"/>
</dbReference>
<dbReference type="Pfam" id="PF02666">
    <property type="entry name" value="PS_Dcarbxylase"/>
    <property type="match status" value="1"/>
</dbReference>
<feature type="chain" id="PRO_1000026588" description="Phosphatidylserine decarboxylase beta chain" evidence="1">
    <location>
        <begin position="1"/>
        <end position="251"/>
    </location>
</feature>
<feature type="chain" id="PRO_1000026589" description="Phosphatidylserine decarboxylase alpha chain" evidence="1">
    <location>
        <begin position="252"/>
        <end position="292"/>
    </location>
</feature>
<feature type="active site" description="Charge relay system; for autoendoproteolytic cleavage activity" evidence="1">
    <location>
        <position position="89"/>
    </location>
</feature>
<feature type="active site" description="Charge relay system; for autoendoproteolytic cleavage activity" evidence="1">
    <location>
        <position position="146"/>
    </location>
</feature>
<feature type="active site" description="Charge relay system; for autoendoproteolytic cleavage activity" evidence="1">
    <location>
        <position position="252"/>
    </location>
</feature>
<feature type="active site" description="Schiff-base intermediate with substrate; via pyruvic acid; for decarboxylase activity" evidence="1">
    <location>
        <position position="252"/>
    </location>
</feature>
<feature type="site" description="Cleavage (non-hydrolytic); by autocatalysis" evidence="1">
    <location>
        <begin position="251"/>
        <end position="252"/>
    </location>
</feature>
<feature type="modified residue" description="Pyruvic acid (Ser); by autocatalysis" evidence="1">
    <location>
        <position position="252"/>
    </location>
</feature>
<keyword id="KW-1003">Cell membrane</keyword>
<keyword id="KW-0210">Decarboxylase</keyword>
<keyword id="KW-0444">Lipid biosynthesis</keyword>
<keyword id="KW-0443">Lipid metabolism</keyword>
<keyword id="KW-0456">Lyase</keyword>
<keyword id="KW-0472">Membrane</keyword>
<keyword id="KW-0594">Phospholipid biosynthesis</keyword>
<keyword id="KW-1208">Phospholipid metabolism</keyword>
<keyword id="KW-0670">Pyruvate</keyword>
<keyword id="KW-0865">Zymogen</keyword>
<organism>
    <name type="scientific">Shewanella sp. (strain ANA-3)</name>
    <dbReference type="NCBI Taxonomy" id="94122"/>
    <lineage>
        <taxon>Bacteria</taxon>
        <taxon>Pseudomonadati</taxon>
        <taxon>Pseudomonadota</taxon>
        <taxon>Gammaproteobacteria</taxon>
        <taxon>Alteromonadales</taxon>
        <taxon>Shewanellaceae</taxon>
        <taxon>Shewanella</taxon>
    </lineage>
</organism>
<comment type="function">
    <text evidence="1">Catalyzes the formation of phosphatidylethanolamine (PtdEtn) from phosphatidylserine (PtdSer).</text>
</comment>
<comment type="catalytic activity">
    <reaction evidence="1">
        <text>a 1,2-diacyl-sn-glycero-3-phospho-L-serine + H(+) = a 1,2-diacyl-sn-glycero-3-phosphoethanolamine + CO2</text>
        <dbReference type="Rhea" id="RHEA:20828"/>
        <dbReference type="ChEBI" id="CHEBI:15378"/>
        <dbReference type="ChEBI" id="CHEBI:16526"/>
        <dbReference type="ChEBI" id="CHEBI:57262"/>
        <dbReference type="ChEBI" id="CHEBI:64612"/>
        <dbReference type="EC" id="4.1.1.65"/>
    </reaction>
</comment>
<comment type="cofactor">
    <cofactor evidence="1">
        <name>pyruvate</name>
        <dbReference type="ChEBI" id="CHEBI:15361"/>
    </cofactor>
    <text evidence="1">Binds 1 pyruvoyl group covalently per subunit.</text>
</comment>
<comment type="pathway">
    <text evidence="1">Phospholipid metabolism; phosphatidylethanolamine biosynthesis; phosphatidylethanolamine from CDP-diacylglycerol: step 2/2.</text>
</comment>
<comment type="subunit">
    <text evidence="1">Heterodimer of a large membrane-associated beta subunit and a small pyruvoyl-containing alpha subunit.</text>
</comment>
<comment type="subcellular location">
    <subcellularLocation>
        <location evidence="1">Cell membrane</location>
        <topology evidence="1">Peripheral membrane protein</topology>
    </subcellularLocation>
</comment>
<comment type="PTM">
    <text evidence="1">Is synthesized initially as an inactive proenzyme. Formation of the active enzyme involves a self-maturation process in which the active site pyruvoyl group is generated from an internal serine residue via an autocatalytic post-translational modification. Two non-identical subunits are generated from the proenzyme in this reaction, and the pyruvate is formed at the N-terminus of the alpha chain, which is derived from the carboxyl end of the proenzyme. The autoendoproteolytic cleavage occurs by a canonical serine protease mechanism, in which the side chain hydroxyl group of the serine supplies its oxygen atom to form the C-terminus of the beta chain, while the remainder of the serine residue undergoes an oxidative deamination to produce ammonia and the pyruvoyl prosthetic group on the alpha chain. During this reaction, the Ser that is part of the protease active site of the proenzyme becomes the pyruvoyl prosthetic group, which constitutes an essential element of the active site of the mature decarboxylase.</text>
</comment>
<comment type="similarity">
    <text evidence="1">Belongs to the phosphatidylserine decarboxylase family. PSD-B subfamily. Prokaryotic type I sub-subfamily.</text>
</comment>
<gene>
    <name evidence="1" type="primary">psd</name>
    <name type="ordered locus">Shewana3_0588</name>
</gene>
<sequence>MDKVKIALQYMLPKHLLSRLVGKLAASEAGALTTAAIKWFIKQYKIDMSEAAQSEPEAYKSFNDFFTRALKPGIRPINTATNIMVHPVDGAVSQLGPIKDGRIFQAKGHHYSSLTLLGDQAEDAKRFEGGDFATIYLAPKDYHRIHMPIKGTLSKMTYVPGELFSVNPLTARHVPGLFARNERVVAIFETELGPLAMVLVGATIVASIETVWAGTITPPTGKQVFTWEYPTVGPDAITLDKGEEMGRFKLGSTVVMLFAKDAIDTFAEGVEPEAVTRMGQAFANLKNQASAD</sequence>
<evidence type="ECO:0000255" key="1">
    <source>
        <dbReference type="HAMAP-Rule" id="MF_00662"/>
    </source>
</evidence>
<reference key="1">
    <citation type="submission" date="2006-09" db="EMBL/GenBank/DDBJ databases">
        <title>Complete sequence of chromosome 1 of Shewanella sp. ANA-3.</title>
        <authorList>
            <person name="Copeland A."/>
            <person name="Lucas S."/>
            <person name="Lapidus A."/>
            <person name="Barry K."/>
            <person name="Detter J.C."/>
            <person name="Glavina del Rio T."/>
            <person name="Hammon N."/>
            <person name="Israni S."/>
            <person name="Dalin E."/>
            <person name="Tice H."/>
            <person name="Pitluck S."/>
            <person name="Chertkov O."/>
            <person name="Brettin T."/>
            <person name="Bruce D."/>
            <person name="Han C."/>
            <person name="Tapia R."/>
            <person name="Gilna P."/>
            <person name="Schmutz J."/>
            <person name="Larimer F."/>
            <person name="Land M."/>
            <person name="Hauser L."/>
            <person name="Kyrpides N."/>
            <person name="Kim E."/>
            <person name="Newman D."/>
            <person name="Salticov C."/>
            <person name="Konstantinidis K."/>
            <person name="Klappenback J."/>
            <person name="Tiedje J."/>
            <person name="Richardson P."/>
        </authorList>
    </citation>
    <scope>NUCLEOTIDE SEQUENCE [LARGE SCALE GENOMIC DNA]</scope>
    <source>
        <strain>ANA-3</strain>
    </source>
</reference>
<name>PSD_SHESA</name>
<proteinExistence type="inferred from homology"/>